<keyword id="KW-0328">Glycosyltransferase</keyword>
<keyword id="KW-0694">RNA-binding</keyword>
<keyword id="KW-0804">Transcription</keyword>
<keyword id="KW-0805">Transcription regulation</keyword>
<keyword id="KW-0806">Transcription termination</keyword>
<keyword id="KW-0808">Transferase</keyword>
<organism>
    <name type="scientific">Staphylococcus aureus (strain USA300)</name>
    <dbReference type="NCBI Taxonomy" id="367830"/>
    <lineage>
        <taxon>Bacteria</taxon>
        <taxon>Bacillati</taxon>
        <taxon>Bacillota</taxon>
        <taxon>Bacilli</taxon>
        <taxon>Bacillales</taxon>
        <taxon>Staphylococcaceae</taxon>
        <taxon>Staphylococcus</taxon>
    </lineage>
</organism>
<name>PYRR_STAA3</name>
<accession>Q2FHP0</accession>
<reference key="1">
    <citation type="journal article" date="2006" name="Lancet">
        <title>Complete genome sequence of USA300, an epidemic clone of community-acquired meticillin-resistant Staphylococcus aureus.</title>
        <authorList>
            <person name="Diep B.A."/>
            <person name="Gill S.R."/>
            <person name="Chang R.F."/>
            <person name="Phan T.H."/>
            <person name="Chen J.H."/>
            <person name="Davidson M.G."/>
            <person name="Lin F."/>
            <person name="Lin J."/>
            <person name="Carleton H.A."/>
            <person name="Mongodin E.F."/>
            <person name="Sensabaugh G.F."/>
            <person name="Perdreau-Remington F."/>
        </authorList>
    </citation>
    <scope>NUCLEOTIDE SEQUENCE [LARGE SCALE GENOMIC DNA]</scope>
    <source>
        <strain>USA300</strain>
    </source>
</reference>
<feature type="chain" id="PRO_1000053862" description="Bifunctional protein PyrR">
    <location>
        <begin position="1"/>
        <end position="175"/>
    </location>
</feature>
<feature type="short sequence motif" description="PRPP-binding" evidence="1">
    <location>
        <begin position="98"/>
        <end position="110"/>
    </location>
</feature>
<sequence>MSERIIMDDAAIQRTVTRIAHEILEYNKGTDNLILLGIKTRGEYLANRIQDKIHQIEQQRIPTGTIDITYFRDDIEHMSSLTTKDAIDIDTDITDKVVIIIDDVLYTGRTVRASLDAILLNARPIKIGLAALVDRGHRELPIRADFVGKNIPTSKEETVSVYLEEMDQRNAVIIK</sequence>
<gene>
    <name evidence="1" type="primary">pyrR</name>
    <name type="ordered locus">SAUSA300_1091</name>
</gene>
<dbReference type="EC" id="2.4.2.9" evidence="1"/>
<dbReference type="EMBL" id="CP000255">
    <property type="protein sequence ID" value="ABD22662.1"/>
    <property type="molecule type" value="Genomic_DNA"/>
</dbReference>
<dbReference type="RefSeq" id="WP_000003870.1">
    <property type="nucleotide sequence ID" value="NZ_CP027476.1"/>
</dbReference>
<dbReference type="SMR" id="Q2FHP0"/>
<dbReference type="KEGG" id="saa:SAUSA300_1091"/>
<dbReference type="HOGENOM" id="CLU_094234_2_1_9"/>
<dbReference type="OMA" id="PIQPDFC"/>
<dbReference type="Proteomes" id="UP000001939">
    <property type="component" value="Chromosome"/>
</dbReference>
<dbReference type="GO" id="GO:0003723">
    <property type="term" value="F:RNA binding"/>
    <property type="evidence" value="ECO:0007669"/>
    <property type="project" value="UniProtKB-UniRule"/>
</dbReference>
<dbReference type="GO" id="GO:0004845">
    <property type="term" value="F:uracil phosphoribosyltransferase activity"/>
    <property type="evidence" value="ECO:0007669"/>
    <property type="project" value="UniProtKB-UniRule"/>
</dbReference>
<dbReference type="GO" id="GO:0006353">
    <property type="term" value="P:DNA-templated transcription termination"/>
    <property type="evidence" value="ECO:0007669"/>
    <property type="project" value="UniProtKB-UniRule"/>
</dbReference>
<dbReference type="CDD" id="cd06223">
    <property type="entry name" value="PRTases_typeI"/>
    <property type="match status" value="1"/>
</dbReference>
<dbReference type="FunFam" id="3.40.50.2020:FF:000020">
    <property type="entry name" value="Bifunctional protein PyrR"/>
    <property type="match status" value="1"/>
</dbReference>
<dbReference type="Gene3D" id="3.40.50.2020">
    <property type="match status" value="1"/>
</dbReference>
<dbReference type="HAMAP" id="MF_01219">
    <property type="entry name" value="PyrR"/>
    <property type="match status" value="1"/>
</dbReference>
<dbReference type="InterPro" id="IPR000836">
    <property type="entry name" value="PRibTrfase_dom"/>
</dbReference>
<dbReference type="InterPro" id="IPR029057">
    <property type="entry name" value="PRTase-like"/>
</dbReference>
<dbReference type="InterPro" id="IPR023050">
    <property type="entry name" value="PyrR"/>
</dbReference>
<dbReference type="InterPro" id="IPR050137">
    <property type="entry name" value="PyrR_bifunctional"/>
</dbReference>
<dbReference type="NCBIfam" id="NF003546">
    <property type="entry name" value="PRK05205.1-2"/>
    <property type="match status" value="1"/>
</dbReference>
<dbReference type="NCBIfam" id="NF003548">
    <property type="entry name" value="PRK05205.1-4"/>
    <property type="match status" value="1"/>
</dbReference>
<dbReference type="NCBIfam" id="NF003549">
    <property type="entry name" value="PRK05205.1-5"/>
    <property type="match status" value="1"/>
</dbReference>
<dbReference type="PANTHER" id="PTHR11608">
    <property type="entry name" value="BIFUNCTIONAL PROTEIN PYRR"/>
    <property type="match status" value="1"/>
</dbReference>
<dbReference type="PANTHER" id="PTHR11608:SF0">
    <property type="entry name" value="BIFUNCTIONAL PROTEIN PYRR"/>
    <property type="match status" value="1"/>
</dbReference>
<dbReference type="Pfam" id="PF00156">
    <property type="entry name" value="Pribosyltran"/>
    <property type="match status" value="1"/>
</dbReference>
<dbReference type="SUPFAM" id="SSF53271">
    <property type="entry name" value="PRTase-like"/>
    <property type="match status" value="1"/>
</dbReference>
<evidence type="ECO:0000255" key="1">
    <source>
        <dbReference type="HAMAP-Rule" id="MF_01219"/>
    </source>
</evidence>
<protein>
    <recommendedName>
        <fullName evidence="1">Bifunctional protein PyrR</fullName>
    </recommendedName>
    <domain>
        <recommendedName>
            <fullName evidence="1">Pyrimidine operon regulatory protein</fullName>
        </recommendedName>
    </domain>
    <domain>
        <recommendedName>
            <fullName evidence="1">Uracil phosphoribosyltransferase</fullName>
            <shortName evidence="1">UPRTase</shortName>
            <ecNumber evidence="1">2.4.2.9</ecNumber>
        </recommendedName>
    </domain>
</protein>
<comment type="function">
    <text evidence="1">Regulates transcriptional attenuation of the pyrimidine nucleotide (pyr) operon by binding in a uridine-dependent manner to specific sites on pyr mRNA. This disrupts an antiterminator hairpin in the RNA and favors formation of a downstream transcription terminator, leading to a reduced expression of downstream genes.</text>
</comment>
<comment type="function">
    <text evidence="1">Also displays a weak uracil phosphoribosyltransferase activity which is not physiologically significant.</text>
</comment>
<comment type="catalytic activity">
    <reaction evidence="1">
        <text>UMP + diphosphate = 5-phospho-alpha-D-ribose 1-diphosphate + uracil</text>
        <dbReference type="Rhea" id="RHEA:13017"/>
        <dbReference type="ChEBI" id="CHEBI:17568"/>
        <dbReference type="ChEBI" id="CHEBI:33019"/>
        <dbReference type="ChEBI" id="CHEBI:57865"/>
        <dbReference type="ChEBI" id="CHEBI:58017"/>
        <dbReference type="EC" id="2.4.2.9"/>
    </reaction>
</comment>
<comment type="subunit">
    <text evidence="1">Homodimer and homohexamer; in equilibrium.</text>
</comment>
<comment type="similarity">
    <text evidence="1">Belongs to the purine/pyrimidine phosphoribosyltransferase family. PyrR subfamily.</text>
</comment>
<proteinExistence type="inferred from homology"/>